<keyword id="KW-0158">Chromosome</keyword>
<keyword id="KW-0238">DNA-binding</keyword>
<keyword id="KW-0539">Nucleus</keyword>
<keyword id="KW-0346">Stress response</keyword>
<organism>
    <name type="scientific">Solanum pennellii</name>
    <name type="common">Tomato</name>
    <name type="synonym">Lycopersicon pennellii</name>
    <dbReference type="NCBI Taxonomy" id="28526"/>
    <lineage>
        <taxon>Eukaryota</taxon>
        <taxon>Viridiplantae</taxon>
        <taxon>Streptophyta</taxon>
        <taxon>Embryophyta</taxon>
        <taxon>Tracheophyta</taxon>
        <taxon>Spermatophyta</taxon>
        <taxon>Magnoliopsida</taxon>
        <taxon>eudicotyledons</taxon>
        <taxon>Gunneridae</taxon>
        <taxon>Pentapetalae</taxon>
        <taxon>asterids</taxon>
        <taxon>lamiids</taxon>
        <taxon>Solanales</taxon>
        <taxon>Solanaceae</taxon>
        <taxon>Solanoideae</taxon>
        <taxon>Solaneae</taxon>
        <taxon>Solanum</taxon>
        <taxon>Solanum subgen. Lycopersicon</taxon>
    </lineage>
</organism>
<accession>P40267</accession>
<protein>
    <recommendedName>
        <fullName>Histone H1</fullName>
    </recommendedName>
</protein>
<reference key="1">
    <citation type="journal article" date="1996" name="Plant Mol. Biol.">
        <title>Structure and characterization of a putative drought-inducible H1 histone gene.</title>
        <authorList>
            <person name="Wei T."/>
            <person name="O'Connell M.A."/>
        </authorList>
    </citation>
    <scope>NUCLEOTIDE SEQUENCE [GENOMIC DNA]</scope>
    <source>
        <strain>cv. LA716</strain>
    </source>
</reference>
<evidence type="ECO:0000255" key="1">
    <source>
        <dbReference type="PROSITE-ProRule" id="PRU00837"/>
    </source>
</evidence>
<evidence type="ECO:0000256" key="2">
    <source>
        <dbReference type="SAM" id="MobiDB-lite"/>
    </source>
</evidence>
<name>H1_SOLPN</name>
<comment type="function">
    <text>Histones H1 are necessary for the condensation of nucleosome chains into higher-order structures.</text>
</comment>
<comment type="subcellular location">
    <subcellularLocation>
        <location>Nucleus</location>
    </subcellularLocation>
    <subcellularLocation>
        <location>Chromosome</location>
    </subcellularLocation>
</comment>
<comment type="induction">
    <text>By abscisic acid (ABA) and drought stress.</text>
</comment>
<comment type="similarity">
    <text evidence="1">Belongs to the histone H1/H5 family.</text>
</comment>
<proteinExistence type="evidence at transcript level"/>
<sequence>MTAIGEVENPTVVQRPTEASKVKEQAPATDKKPRAPKEKKPKSAKAVTHPPYFQMIKEALLALNEKGGSSPYAVAKYMEDKHKDELPANFRKILGLQLKNSAAKGKLIKIKASYKLSEAGKKETTTKTSTKKLPKADSKKKPRSTRATATAAKKTEVPKKAKATPKPKKVGAKRTRKSTPAKAKQPKSIKSPAAKRAKKIAV</sequence>
<dbReference type="EMBL" id="U01890">
    <property type="protein sequence ID" value="AAB03076.1"/>
    <property type="molecule type" value="Genomic_DNA"/>
</dbReference>
<dbReference type="PIR" id="S65059">
    <property type="entry name" value="S65059"/>
</dbReference>
<dbReference type="RefSeq" id="NP_001412576.1">
    <property type="nucleotide sequence ID" value="NM_001425647.1"/>
</dbReference>
<dbReference type="SMR" id="P40267"/>
<dbReference type="GeneID" id="107011975"/>
<dbReference type="GO" id="GO:0000786">
    <property type="term" value="C:nucleosome"/>
    <property type="evidence" value="ECO:0007669"/>
    <property type="project" value="InterPro"/>
</dbReference>
<dbReference type="GO" id="GO:0005634">
    <property type="term" value="C:nucleus"/>
    <property type="evidence" value="ECO:0007669"/>
    <property type="project" value="UniProtKB-SubCell"/>
</dbReference>
<dbReference type="GO" id="GO:0003690">
    <property type="term" value="F:double-stranded DNA binding"/>
    <property type="evidence" value="ECO:0007669"/>
    <property type="project" value="TreeGrafter"/>
</dbReference>
<dbReference type="GO" id="GO:0031492">
    <property type="term" value="F:nucleosomal DNA binding"/>
    <property type="evidence" value="ECO:0007669"/>
    <property type="project" value="TreeGrafter"/>
</dbReference>
<dbReference type="GO" id="GO:0030527">
    <property type="term" value="F:structural constituent of chromatin"/>
    <property type="evidence" value="ECO:0007669"/>
    <property type="project" value="InterPro"/>
</dbReference>
<dbReference type="GO" id="GO:0030261">
    <property type="term" value="P:chromosome condensation"/>
    <property type="evidence" value="ECO:0007669"/>
    <property type="project" value="TreeGrafter"/>
</dbReference>
<dbReference type="GO" id="GO:0045910">
    <property type="term" value="P:negative regulation of DNA recombination"/>
    <property type="evidence" value="ECO:0007669"/>
    <property type="project" value="TreeGrafter"/>
</dbReference>
<dbReference type="GO" id="GO:0006334">
    <property type="term" value="P:nucleosome assembly"/>
    <property type="evidence" value="ECO:0007669"/>
    <property type="project" value="InterPro"/>
</dbReference>
<dbReference type="CDD" id="cd00073">
    <property type="entry name" value="H15"/>
    <property type="match status" value="1"/>
</dbReference>
<dbReference type="Gene3D" id="1.10.10.10">
    <property type="entry name" value="Winged helix-like DNA-binding domain superfamily/Winged helix DNA-binding domain"/>
    <property type="match status" value="1"/>
</dbReference>
<dbReference type="InterPro" id="IPR005819">
    <property type="entry name" value="H1/H5"/>
</dbReference>
<dbReference type="InterPro" id="IPR005818">
    <property type="entry name" value="Histone_H1/H5_H15"/>
</dbReference>
<dbReference type="InterPro" id="IPR036388">
    <property type="entry name" value="WH-like_DNA-bd_sf"/>
</dbReference>
<dbReference type="InterPro" id="IPR036390">
    <property type="entry name" value="WH_DNA-bd_sf"/>
</dbReference>
<dbReference type="PANTHER" id="PTHR11467:SF36">
    <property type="entry name" value="HISTONE 24-RELATED"/>
    <property type="match status" value="1"/>
</dbReference>
<dbReference type="PANTHER" id="PTHR11467">
    <property type="entry name" value="HISTONE H1"/>
    <property type="match status" value="1"/>
</dbReference>
<dbReference type="Pfam" id="PF00538">
    <property type="entry name" value="Linker_histone"/>
    <property type="match status" value="1"/>
</dbReference>
<dbReference type="PRINTS" id="PR00624">
    <property type="entry name" value="HISTONEH5"/>
</dbReference>
<dbReference type="SMART" id="SM00526">
    <property type="entry name" value="H15"/>
    <property type="match status" value="1"/>
</dbReference>
<dbReference type="SUPFAM" id="SSF46785">
    <property type="entry name" value="Winged helix' DNA-binding domain"/>
    <property type="match status" value="1"/>
</dbReference>
<dbReference type="PROSITE" id="PS51504">
    <property type="entry name" value="H15"/>
    <property type="match status" value="1"/>
</dbReference>
<feature type="chain" id="PRO_0000195953" description="Histone H1">
    <location>
        <begin position="1"/>
        <end position="202"/>
    </location>
</feature>
<feature type="domain" description="H15" evidence="1">
    <location>
        <begin position="48"/>
        <end position="118"/>
    </location>
</feature>
<feature type="region of interest" description="Disordered" evidence="2">
    <location>
        <begin position="1"/>
        <end position="50"/>
    </location>
</feature>
<feature type="region of interest" description="Disordered" evidence="2">
    <location>
        <begin position="114"/>
        <end position="202"/>
    </location>
</feature>
<feature type="compositionally biased region" description="Basic and acidic residues" evidence="2">
    <location>
        <begin position="18"/>
        <end position="38"/>
    </location>
</feature>
<feature type="compositionally biased region" description="Basic residues" evidence="2">
    <location>
        <begin position="160"/>
        <end position="202"/>
    </location>
</feature>